<comment type="function">
    <text evidence="1">Binds to DNA and alters its conformation. May be involved in regulation of gene expression, nucleoid organization and DNA protection.</text>
</comment>
<comment type="subunit">
    <text evidence="1">Homodimer.</text>
</comment>
<comment type="subcellular location">
    <subcellularLocation>
        <location evidence="1">Cytoplasm</location>
        <location evidence="1">Nucleoid</location>
    </subcellularLocation>
</comment>
<comment type="similarity">
    <text evidence="1">Belongs to the YbaB/EbfC family.</text>
</comment>
<protein>
    <recommendedName>
        <fullName evidence="1">Nucleoid-associated protein XCC1002</fullName>
    </recommendedName>
</protein>
<accession>Q8PBW5</accession>
<feature type="chain" id="PRO_0000170468" description="Nucleoid-associated protein XCC1002">
    <location>
        <begin position="1"/>
        <end position="106"/>
    </location>
</feature>
<feature type="region of interest" description="Disordered" evidence="2">
    <location>
        <begin position="82"/>
        <end position="106"/>
    </location>
</feature>
<reference key="1">
    <citation type="journal article" date="2002" name="Nature">
        <title>Comparison of the genomes of two Xanthomonas pathogens with differing host specificities.</title>
        <authorList>
            <person name="da Silva A.C.R."/>
            <person name="Ferro J.A."/>
            <person name="Reinach F.C."/>
            <person name="Farah C.S."/>
            <person name="Furlan L.R."/>
            <person name="Quaggio R.B."/>
            <person name="Monteiro-Vitorello C.B."/>
            <person name="Van Sluys M.A."/>
            <person name="Almeida N.F. Jr."/>
            <person name="Alves L.M.C."/>
            <person name="do Amaral A.M."/>
            <person name="Bertolini M.C."/>
            <person name="Camargo L.E.A."/>
            <person name="Camarotte G."/>
            <person name="Cannavan F."/>
            <person name="Cardozo J."/>
            <person name="Chambergo F."/>
            <person name="Ciapina L.P."/>
            <person name="Cicarelli R.M.B."/>
            <person name="Coutinho L.L."/>
            <person name="Cursino-Santos J.R."/>
            <person name="El-Dorry H."/>
            <person name="Faria J.B."/>
            <person name="Ferreira A.J.S."/>
            <person name="Ferreira R.C.C."/>
            <person name="Ferro M.I.T."/>
            <person name="Formighieri E.F."/>
            <person name="Franco M.C."/>
            <person name="Greggio C.C."/>
            <person name="Gruber A."/>
            <person name="Katsuyama A.M."/>
            <person name="Kishi L.T."/>
            <person name="Leite R.P."/>
            <person name="Lemos E.G.M."/>
            <person name="Lemos M.V.F."/>
            <person name="Locali E.C."/>
            <person name="Machado M.A."/>
            <person name="Madeira A.M.B.N."/>
            <person name="Martinez-Rossi N.M."/>
            <person name="Martins E.C."/>
            <person name="Meidanis J."/>
            <person name="Menck C.F.M."/>
            <person name="Miyaki C.Y."/>
            <person name="Moon D.H."/>
            <person name="Moreira L.M."/>
            <person name="Novo M.T.M."/>
            <person name="Okura V.K."/>
            <person name="Oliveira M.C."/>
            <person name="Oliveira V.R."/>
            <person name="Pereira H.A."/>
            <person name="Rossi A."/>
            <person name="Sena J.A.D."/>
            <person name="Silva C."/>
            <person name="de Souza R.F."/>
            <person name="Spinola L.A.F."/>
            <person name="Takita M.A."/>
            <person name="Tamura R.E."/>
            <person name="Teixeira E.C."/>
            <person name="Tezza R.I.D."/>
            <person name="Trindade dos Santos M."/>
            <person name="Truffi D."/>
            <person name="Tsai S.M."/>
            <person name="White F.F."/>
            <person name="Setubal J.C."/>
            <person name="Kitajima J.P."/>
        </authorList>
    </citation>
    <scope>NUCLEOTIDE SEQUENCE [LARGE SCALE GENOMIC DNA]</scope>
    <source>
        <strain>ATCC 33913 / DSM 3586 / NCPPB 528 / LMG 568 / P 25</strain>
    </source>
</reference>
<gene>
    <name type="ordered locus">XCC1002</name>
</gene>
<sequence length="106" mass="11382">MRGNIAQLMQQAQKMQENLQRAQEELAKLEVTGSAGGGMVSVTLTGAKECRKVRIDPSILSDQEMAEDLIAAAFNDASNKIDAESKERMGSATAGMQLPPGMKLPF</sequence>
<dbReference type="EMBL" id="AE008922">
    <property type="protein sequence ID" value="AAM40302.1"/>
    <property type="molecule type" value="Genomic_DNA"/>
</dbReference>
<dbReference type="RefSeq" id="NP_636378.1">
    <property type="nucleotide sequence ID" value="NC_003902.1"/>
</dbReference>
<dbReference type="RefSeq" id="WP_011036205.1">
    <property type="nucleotide sequence ID" value="NC_003902.1"/>
</dbReference>
<dbReference type="SMR" id="Q8PBW5"/>
<dbReference type="STRING" id="190485.XCC1002"/>
<dbReference type="EnsemblBacteria" id="AAM40302">
    <property type="protein sequence ID" value="AAM40302"/>
    <property type="gene ID" value="XCC1002"/>
</dbReference>
<dbReference type="KEGG" id="xcc:XCC1002"/>
<dbReference type="PATRIC" id="fig|190485.4.peg.1066"/>
<dbReference type="eggNOG" id="COG0718">
    <property type="taxonomic scope" value="Bacteria"/>
</dbReference>
<dbReference type="HOGENOM" id="CLU_140930_0_0_6"/>
<dbReference type="OrthoDB" id="9808738at2"/>
<dbReference type="Proteomes" id="UP000001010">
    <property type="component" value="Chromosome"/>
</dbReference>
<dbReference type="GO" id="GO:0043590">
    <property type="term" value="C:bacterial nucleoid"/>
    <property type="evidence" value="ECO:0007669"/>
    <property type="project" value="UniProtKB-UniRule"/>
</dbReference>
<dbReference type="GO" id="GO:0005829">
    <property type="term" value="C:cytosol"/>
    <property type="evidence" value="ECO:0000318"/>
    <property type="project" value="GO_Central"/>
</dbReference>
<dbReference type="GO" id="GO:0003677">
    <property type="term" value="F:DNA binding"/>
    <property type="evidence" value="ECO:0000318"/>
    <property type="project" value="GO_Central"/>
</dbReference>
<dbReference type="FunFam" id="3.30.1310.10:FF:000001">
    <property type="entry name" value="Nucleoid-associated protein YbaB"/>
    <property type="match status" value="1"/>
</dbReference>
<dbReference type="Gene3D" id="3.30.1310.10">
    <property type="entry name" value="Nucleoid-associated protein YbaB-like domain"/>
    <property type="match status" value="1"/>
</dbReference>
<dbReference type="HAMAP" id="MF_00274">
    <property type="entry name" value="DNA_YbaB_EbfC"/>
    <property type="match status" value="1"/>
</dbReference>
<dbReference type="InterPro" id="IPR036894">
    <property type="entry name" value="YbaB-like_sf"/>
</dbReference>
<dbReference type="InterPro" id="IPR004401">
    <property type="entry name" value="YbaB/EbfC"/>
</dbReference>
<dbReference type="NCBIfam" id="TIGR00103">
    <property type="entry name" value="DNA_YbaB_EbfC"/>
    <property type="match status" value="1"/>
</dbReference>
<dbReference type="PANTHER" id="PTHR33449">
    <property type="entry name" value="NUCLEOID-ASSOCIATED PROTEIN YBAB"/>
    <property type="match status" value="1"/>
</dbReference>
<dbReference type="PANTHER" id="PTHR33449:SF1">
    <property type="entry name" value="NUCLEOID-ASSOCIATED PROTEIN YBAB"/>
    <property type="match status" value="1"/>
</dbReference>
<dbReference type="Pfam" id="PF02575">
    <property type="entry name" value="YbaB_DNA_bd"/>
    <property type="match status" value="1"/>
</dbReference>
<dbReference type="PIRSF" id="PIRSF004555">
    <property type="entry name" value="UCP004555"/>
    <property type="match status" value="1"/>
</dbReference>
<dbReference type="SUPFAM" id="SSF82607">
    <property type="entry name" value="YbaB-like"/>
    <property type="match status" value="1"/>
</dbReference>
<keyword id="KW-0963">Cytoplasm</keyword>
<keyword id="KW-0238">DNA-binding</keyword>
<keyword id="KW-1185">Reference proteome</keyword>
<proteinExistence type="inferred from homology"/>
<evidence type="ECO:0000255" key="1">
    <source>
        <dbReference type="HAMAP-Rule" id="MF_00274"/>
    </source>
</evidence>
<evidence type="ECO:0000256" key="2">
    <source>
        <dbReference type="SAM" id="MobiDB-lite"/>
    </source>
</evidence>
<organism>
    <name type="scientific">Xanthomonas campestris pv. campestris (strain ATCC 33913 / DSM 3586 / NCPPB 528 / LMG 568 / P 25)</name>
    <dbReference type="NCBI Taxonomy" id="190485"/>
    <lineage>
        <taxon>Bacteria</taxon>
        <taxon>Pseudomonadati</taxon>
        <taxon>Pseudomonadota</taxon>
        <taxon>Gammaproteobacteria</taxon>
        <taxon>Lysobacterales</taxon>
        <taxon>Lysobacteraceae</taxon>
        <taxon>Xanthomonas</taxon>
    </lineage>
</organism>
<name>Y1002_XANCP</name>